<feature type="chain" id="PRO_0000060750" description="Cytochrome b">
    <location>
        <begin position="1"/>
        <end position="379"/>
    </location>
</feature>
<feature type="transmembrane region" description="Helical" evidence="2">
    <location>
        <begin position="33"/>
        <end position="53"/>
    </location>
</feature>
<feature type="transmembrane region" description="Helical" evidence="2">
    <location>
        <begin position="77"/>
        <end position="98"/>
    </location>
</feature>
<feature type="transmembrane region" description="Helical" evidence="2">
    <location>
        <begin position="113"/>
        <end position="133"/>
    </location>
</feature>
<feature type="transmembrane region" description="Helical" evidence="2">
    <location>
        <begin position="178"/>
        <end position="198"/>
    </location>
</feature>
<feature type="transmembrane region" description="Helical" evidence="2">
    <location>
        <begin position="226"/>
        <end position="246"/>
    </location>
</feature>
<feature type="transmembrane region" description="Helical" evidence="2">
    <location>
        <begin position="288"/>
        <end position="308"/>
    </location>
</feature>
<feature type="transmembrane region" description="Helical" evidence="2">
    <location>
        <begin position="320"/>
        <end position="340"/>
    </location>
</feature>
<feature type="transmembrane region" description="Helical" evidence="2">
    <location>
        <begin position="347"/>
        <end position="367"/>
    </location>
</feature>
<feature type="binding site" description="axial binding residue" evidence="2">
    <location>
        <position position="83"/>
    </location>
    <ligand>
        <name>heme b</name>
        <dbReference type="ChEBI" id="CHEBI:60344"/>
        <label>b562</label>
    </ligand>
    <ligandPart>
        <name>Fe</name>
        <dbReference type="ChEBI" id="CHEBI:18248"/>
    </ligandPart>
</feature>
<feature type="binding site" description="axial binding residue" evidence="2">
    <location>
        <position position="97"/>
    </location>
    <ligand>
        <name>heme b</name>
        <dbReference type="ChEBI" id="CHEBI:60344"/>
        <label>b566</label>
    </ligand>
    <ligandPart>
        <name>Fe</name>
        <dbReference type="ChEBI" id="CHEBI:18248"/>
    </ligandPart>
</feature>
<feature type="binding site" description="axial binding residue" evidence="2">
    <location>
        <position position="182"/>
    </location>
    <ligand>
        <name>heme b</name>
        <dbReference type="ChEBI" id="CHEBI:60344"/>
        <label>b562</label>
    </ligand>
    <ligandPart>
        <name>Fe</name>
        <dbReference type="ChEBI" id="CHEBI:18248"/>
    </ligandPart>
</feature>
<feature type="binding site" description="axial binding residue" evidence="2">
    <location>
        <position position="196"/>
    </location>
    <ligand>
        <name>heme b</name>
        <dbReference type="ChEBI" id="CHEBI:60344"/>
        <label>b566</label>
    </ligand>
    <ligandPart>
        <name>Fe</name>
        <dbReference type="ChEBI" id="CHEBI:18248"/>
    </ligandPart>
</feature>
<feature type="binding site" evidence="2">
    <location>
        <position position="201"/>
    </location>
    <ligand>
        <name>a ubiquinone</name>
        <dbReference type="ChEBI" id="CHEBI:16389"/>
    </ligand>
</feature>
<reference key="1">
    <citation type="journal article" date="1999" name="Mol. Phylogenet. Evol.">
        <title>The tribal radiation of the family Bovidae (Artiodactyla) and the evolution of the mitochondrial cytochrome b gene.</title>
        <authorList>
            <person name="Hassanin A."/>
            <person name="Douzery E.J.P."/>
        </authorList>
    </citation>
    <scope>NUCLEOTIDE SEQUENCE [GENOMIC DNA]</scope>
</reference>
<gene>
    <name type="primary">MT-CYB</name>
    <name type="synonym">COB</name>
    <name type="synonym">CYTB</name>
    <name type="synonym">MTCYB</name>
</gene>
<dbReference type="EMBL" id="AJ222684">
    <property type="protein sequence ID" value="CAA10939.1"/>
    <property type="molecule type" value="Genomic_DNA"/>
</dbReference>
<dbReference type="SMR" id="O79327"/>
<dbReference type="GO" id="GO:0005743">
    <property type="term" value="C:mitochondrial inner membrane"/>
    <property type="evidence" value="ECO:0007669"/>
    <property type="project" value="UniProtKB-SubCell"/>
</dbReference>
<dbReference type="GO" id="GO:0045275">
    <property type="term" value="C:respiratory chain complex III"/>
    <property type="evidence" value="ECO:0007669"/>
    <property type="project" value="InterPro"/>
</dbReference>
<dbReference type="GO" id="GO:0046872">
    <property type="term" value="F:metal ion binding"/>
    <property type="evidence" value="ECO:0007669"/>
    <property type="project" value="UniProtKB-KW"/>
</dbReference>
<dbReference type="GO" id="GO:0008121">
    <property type="term" value="F:ubiquinol-cytochrome-c reductase activity"/>
    <property type="evidence" value="ECO:0007669"/>
    <property type="project" value="InterPro"/>
</dbReference>
<dbReference type="GO" id="GO:0006122">
    <property type="term" value="P:mitochondrial electron transport, ubiquinol to cytochrome c"/>
    <property type="evidence" value="ECO:0007669"/>
    <property type="project" value="TreeGrafter"/>
</dbReference>
<dbReference type="CDD" id="cd00290">
    <property type="entry name" value="cytochrome_b_C"/>
    <property type="match status" value="1"/>
</dbReference>
<dbReference type="CDD" id="cd00284">
    <property type="entry name" value="Cytochrome_b_N"/>
    <property type="match status" value="1"/>
</dbReference>
<dbReference type="FunFam" id="1.20.810.10:FF:000002">
    <property type="entry name" value="Cytochrome b"/>
    <property type="match status" value="1"/>
</dbReference>
<dbReference type="Gene3D" id="1.20.810.10">
    <property type="entry name" value="Cytochrome Bc1 Complex, Chain C"/>
    <property type="match status" value="1"/>
</dbReference>
<dbReference type="InterPro" id="IPR005798">
    <property type="entry name" value="Cyt_b/b6_C"/>
</dbReference>
<dbReference type="InterPro" id="IPR036150">
    <property type="entry name" value="Cyt_b/b6_C_sf"/>
</dbReference>
<dbReference type="InterPro" id="IPR005797">
    <property type="entry name" value="Cyt_b/b6_N"/>
</dbReference>
<dbReference type="InterPro" id="IPR027387">
    <property type="entry name" value="Cytb/b6-like_sf"/>
</dbReference>
<dbReference type="InterPro" id="IPR030689">
    <property type="entry name" value="Cytochrome_b"/>
</dbReference>
<dbReference type="InterPro" id="IPR048260">
    <property type="entry name" value="Cytochrome_b_C_euk/bac"/>
</dbReference>
<dbReference type="InterPro" id="IPR048259">
    <property type="entry name" value="Cytochrome_b_N_euk/bac"/>
</dbReference>
<dbReference type="InterPro" id="IPR016174">
    <property type="entry name" value="Di-haem_cyt_TM"/>
</dbReference>
<dbReference type="PANTHER" id="PTHR19271">
    <property type="entry name" value="CYTOCHROME B"/>
    <property type="match status" value="1"/>
</dbReference>
<dbReference type="PANTHER" id="PTHR19271:SF16">
    <property type="entry name" value="CYTOCHROME B"/>
    <property type="match status" value="1"/>
</dbReference>
<dbReference type="Pfam" id="PF00032">
    <property type="entry name" value="Cytochrom_B_C"/>
    <property type="match status" value="1"/>
</dbReference>
<dbReference type="Pfam" id="PF00033">
    <property type="entry name" value="Cytochrome_B"/>
    <property type="match status" value="1"/>
</dbReference>
<dbReference type="PIRSF" id="PIRSF038885">
    <property type="entry name" value="COB"/>
    <property type="match status" value="1"/>
</dbReference>
<dbReference type="SUPFAM" id="SSF81648">
    <property type="entry name" value="a domain/subunit of cytochrome bc1 complex (Ubiquinol-cytochrome c reductase)"/>
    <property type="match status" value="1"/>
</dbReference>
<dbReference type="SUPFAM" id="SSF81342">
    <property type="entry name" value="Transmembrane di-heme cytochromes"/>
    <property type="match status" value="1"/>
</dbReference>
<dbReference type="PROSITE" id="PS51003">
    <property type="entry name" value="CYTB_CTER"/>
    <property type="match status" value="1"/>
</dbReference>
<dbReference type="PROSITE" id="PS51002">
    <property type="entry name" value="CYTB_NTER"/>
    <property type="match status" value="1"/>
</dbReference>
<sequence length="379" mass="42793">MTNIRKTHPLMKIVNNAFIDLPAPSNISSWWNFGSLLGICLILQILTGLFLAMHYTADTTTAFSSVTHICRDVNYGWIIRYMHANGASMFFICLFMHVGRGLYYGSYAFMETWNIGVILLFATMATAFMGYVLPWGQMSFWGATVITNLLSAIPYIGTNLVEWIWGGFSVDKATLTRFFAFHFIFPFIIAALAMVHLLFLHKTGSNNPTGISSDTDKIPFHPYYTIKDILGARLLILALMLLVLFSPDLLGDPDNYTPANPLNTPPHIKPEWYFLFAYAILRSIPNKLGGVLALVLSILILILMPLLHTSKQWSMMFRPISQCLFWILVADLLTLTWTGGQPVEHPYIIIGQLASIMYFLLILVLMPMASTTENNLLKW</sequence>
<name>CYB_CEPLE</name>
<keyword id="KW-0249">Electron transport</keyword>
<keyword id="KW-0349">Heme</keyword>
<keyword id="KW-0408">Iron</keyword>
<keyword id="KW-0472">Membrane</keyword>
<keyword id="KW-0479">Metal-binding</keyword>
<keyword id="KW-0496">Mitochondrion</keyword>
<keyword id="KW-0999">Mitochondrion inner membrane</keyword>
<keyword id="KW-0679">Respiratory chain</keyword>
<keyword id="KW-0812">Transmembrane</keyword>
<keyword id="KW-1133">Transmembrane helix</keyword>
<keyword id="KW-0813">Transport</keyword>
<keyword id="KW-0830">Ubiquinone</keyword>
<organism>
    <name type="scientific">Cephalophorus leucogaster</name>
    <name type="common">White-bellied duiker</name>
    <name type="synonym">Cephalophus leucogaster</name>
    <dbReference type="NCBI Taxonomy" id="70738"/>
    <lineage>
        <taxon>Eukaryota</taxon>
        <taxon>Metazoa</taxon>
        <taxon>Chordata</taxon>
        <taxon>Craniata</taxon>
        <taxon>Vertebrata</taxon>
        <taxon>Euteleostomi</taxon>
        <taxon>Mammalia</taxon>
        <taxon>Eutheria</taxon>
        <taxon>Laurasiatheria</taxon>
        <taxon>Artiodactyla</taxon>
        <taxon>Ruminantia</taxon>
        <taxon>Pecora</taxon>
        <taxon>Bovidae</taxon>
        <taxon>Cephalophinae</taxon>
        <taxon>Cephalophorus</taxon>
    </lineage>
</organism>
<accession>O79327</accession>
<evidence type="ECO:0000250" key="1"/>
<evidence type="ECO:0000250" key="2">
    <source>
        <dbReference type="UniProtKB" id="P00157"/>
    </source>
</evidence>
<evidence type="ECO:0000255" key="3">
    <source>
        <dbReference type="PROSITE-ProRule" id="PRU00967"/>
    </source>
</evidence>
<evidence type="ECO:0000255" key="4">
    <source>
        <dbReference type="PROSITE-ProRule" id="PRU00968"/>
    </source>
</evidence>
<comment type="function">
    <text evidence="2">Component of the ubiquinol-cytochrome c reductase complex (complex III or cytochrome b-c1 complex) that is part of the mitochondrial respiratory chain. The b-c1 complex mediates electron transfer from ubiquinol to cytochrome c. Contributes to the generation of a proton gradient across the mitochondrial membrane that is then used for ATP synthesis.</text>
</comment>
<comment type="cofactor">
    <cofactor evidence="2">
        <name>heme b</name>
        <dbReference type="ChEBI" id="CHEBI:60344"/>
    </cofactor>
    <text evidence="2">Binds 2 heme b groups non-covalently.</text>
</comment>
<comment type="subunit">
    <text evidence="2">The cytochrome bc1 complex contains 11 subunits: 3 respiratory subunits (MT-CYB, CYC1 and UQCRFS1), 2 core proteins (UQCRC1 and UQCRC2) and 6 low-molecular weight proteins (UQCRH/QCR6, UQCRB/QCR7, UQCRQ/QCR8, UQCR10/QCR9, UQCR11/QCR10 and a cleavage product of UQCRFS1). This cytochrome bc1 complex then forms a dimer.</text>
</comment>
<comment type="subcellular location">
    <subcellularLocation>
        <location evidence="2">Mitochondrion inner membrane</location>
        <topology evidence="2">Multi-pass membrane protein</topology>
    </subcellularLocation>
</comment>
<comment type="miscellaneous">
    <text evidence="1">Heme 1 (or BL or b562) is low-potential and absorbs at about 562 nm, and heme 2 (or BH or b566) is high-potential and absorbs at about 566 nm.</text>
</comment>
<comment type="similarity">
    <text evidence="3 4">Belongs to the cytochrome b family.</text>
</comment>
<comment type="caution">
    <text evidence="2">The full-length protein contains only eight transmembrane helices, not nine as predicted by bioinformatics tools.</text>
</comment>
<geneLocation type="mitochondrion"/>
<proteinExistence type="inferred from homology"/>
<protein>
    <recommendedName>
        <fullName>Cytochrome b</fullName>
    </recommendedName>
    <alternativeName>
        <fullName>Complex III subunit 3</fullName>
    </alternativeName>
    <alternativeName>
        <fullName>Complex III subunit III</fullName>
    </alternativeName>
    <alternativeName>
        <fullName>Cytochrome b-c1 complex subunit 3</fullName>
    </alternativeName>
    <alternativeName>
        <fullName>Ubiquinol-cytochrome-c reductase complex cytochrome b subunit</fullName>
    </alternativeName>
</protein>